<reference key="1">
    <citation type="journal article" date="2007" name="Mol. Genet. Genomics">
        <title>Chloroplast genomes of the diatoms Phaeodactylum tricornutum and Thalassiosira pseudonana: comparison with other plastid genomes of the red lineage.</title>
        <authorList>
            <person name="Oudot-Le Secq M.-P."/>
            <person name="Grimwood J."/>
            <person name="Shapiro H."/>
            <person name="Armbrust E.V."/>
            <person name="Bowler C."/>
            <person name="Green B.R."/>
        </authorList>
    </citation>
    <scope>NUCLEOTIDE SEQUENCE [LARGE SCALE GENOMIC DNA]</scope>
    <source>
        <strain>CCAP 1055/1</strain>
    </source>
</reference>
<organism>
    <name type="scientific">Phaeodactylum tricornutum (strain CCAP 1055/1)</name>
    <dbReference type="NCBI Taxonomy" id="556484"/>
    <lineage>
        <taxon>Eukaryota</taxon>
        <taxon>Sar</taxon>
        <taxon>Stramenopiles</taxon>
        <taxon>Ochrophyta</taxon>
        <taxon>Bacillariophyta</taxon>
        <taxon>Bacillariophyceae</taxon>
        <taxon>Bacillariophycidae</taxon>
        <taxon>Naviculales</taxon>
        <taxon>Phaeodactylaceae</taxon>
        <taxon>Phaeodactylum</taxon>
    </lineage>
</organism>
<accession>A0T0K7</accession>
<comment type="function">
    <text evidence="1">Involved in the binding of tRNA to the ribosomes.</text>
</comment>
<comment type="subunit">
    <text evidence="1">Part of the 30S ribosomal subunit.</text>
</comment>
<comment type="subcellular location">
    <subcellularLocation>
        <location evidence="1">Plastid</location>
        <location evidence="1">Chloroplast</location>
    </subcellularLocation>
</comment>
<comment type="similarity">
    <text evidence="1">Belongs to the universal ribosomal protein uS10 family.</text>
</comment>
<proteinExistence type="inferred from homology"/>
<evidence type="ECO:0000255" key="1">
    <source>
        <dbReference type="HAMAP-Rule" id="MF_00508"/>
    </source>
</evidence>
<evidence type="ECO:0000305" key="2"/>
<geneLocation type="chloroplast"/>
<gene>
    <name evidence="1" type="primary">rps10</name>
</gene>
<feature type="chain" id="PRO_0000276603" description="Small ribosomal subunit protein uS10c">
    <location>
        <begin position="1"/>
        <end position="107"/>
    </location>
</feature>
<sequence>MEMKTDAKIRVRLESFNHELLNSSCQKIVNILQNTLSNSIGVITLPTRKRIYCVLRSPHVDKDSREHFEIRTHKRILEIYYNSEVPIFDLLSEADLPPGVFYRICLS</sequence>
<dbReference type="EMBL" id="EF067920">
    <property type="protein sequence ID" value="ABK20705.1"/>
    <property type="molecule type" value="Genomic_DNA"/>
</dbReference>
<dbReference type="RefSeq" id="YP_874482.1">
    <property type="nucleotide sequence ID" value="NC_008588.1"/>
</dbReference>
<dbReference type="SMR" id="A0T0K7"/>
<dbReference type="STRING" id="556484.A0T0K7"/>
<dbReference type="GeneID" id="4524683"/>
<dbReference type="InParanoid" id="A0T0K7"/>
<dbReference type="Proteomes" id="UP000000759">
    <property type="component" value="Chloroplast"/>
</dbReference>
<dbReference type="GO" id="GO:0009507">
    <property type="term" value="C:chloroplast"/>
    <property type="evidence" value="ECO:0007669"/>
    <property type="project" value="UniProtKB-SubCell"/>
</dbReference>
<dbReference type="GO" id="GO:1990904">
    <property type="term" value="C:ribonucleoprotein complex"/>
    <property type="evidence" value="ECO:0007669"/>
    <property type="project" value="UniProtKB-KW"/>
</dbReference>
<dbReference type="GO" id="GO:0005840">
    <property type="term" value="C:ribosome"/>
    <property type="evidence" value="ECO:0007669"/>
    <property type="project" value="UniProtKB-KW"/>
</dbReference>
<dbReference type="GO" id="GO:0003735">
    <property type="term" value="F:structural constituent of ribosome"/>
    <property type="evidence" value="ECO:0007669"/>
    <property type="project" value="InterPro"/>
</dbReference>
<dbReference type="GO" id="GO:0000049">
    <property type="term" value="F:tRNA binding"/>
    <property type="evidence" value="ECO:0007669"/>
    <property type="project" value="UniProtKB-UniRule"/>
</dbReference>
<dbReference type="GO" id="GO:0006412">
    <property type="term" value="P:translation"/>
    <property type="evidence" value="ECO:0007669"/>
    <property type="project" value="UniProtKB-UniRule"/>
</dbReference>
<dbReference type="FunFam" id="3.30.70.600:FF:000003">
    <property type="entry name" value="30S ribosomal protein S10"/>
    <property type="match status" value="1"/>
</dbReference>
<dbReference type="Gene3D" id="3.30.70.600">
    <property type="entry name" value="Ribosomal protein S10 domain"/>
    <property type="match status" value="1"/>
</dbReference>
<dbReference type="HAMAP" id="MF_00508">
    <property type="entry name" value="Ribosomal_uS10"/>
    <property type="match status" value="1"/>
</dbReference>
<dbReference type="InterPro" id="IPR001848">
    <property type="entry name" value="Ribosomal_uS10"/>
</dbReference>
<dbReference type="InterPro" id="IPR027486">
    <property type="entry name" value="Ribosomal_uS10_dom"/>
</dbReference>
<dbReference type="InterPro" id="IPR036838">
    <property type="entry name" value="Ribosomal_uS10_dom_sf"/>
</dbReference>
<dbReference type="NCBIfam" id="NF001861">
    <property type="entry name" value="PRK00596.1"/>
    <property type="match status" value="1"/>
</dbReference>
<dbReference type="NCBIfam" id="TIGR01049">
    <property type="entry name" value="rpsJ_bact"/>
    <property type="match status" value="1"/>
</dbReference>
<dbReference type="PANTHER" id="PTHR11700">
    <property type="entry name" value="30S RIBOSOMAL PROTEIN S10 FAMILY MEMBER"/>
    <property type="match status" value="1"/>
</dbReference>
<dbReference type="Pfam" id="PF00338">
    <property type="entry name" value="Ribosomal_S10"/>
    <property type="match status" value="1"/>
</dbReference>
<dbReference type="PRINTS" id="PR00971">
    <property type="entry name" value="RIBOSOMALS10"/>
</dbReference>
<dbReference type="SMART" id="SM01403">
    <property type="entry name" value="Ribosomal_S10"/>
    <property type="match status" value="1"/>
</dbReference>
<dbReference type="SUPFAM" id="SSF54999">
    <property type="entry name" value="Ribosomal protein S10"/>
    <property type="match status" value="1"/>
</dbReference>
<name>RR10_PHATC</name>
<protein>
    <recommendedName>
        <fullName evidence="1">Small ribosomal subunit protein uS10c</fullName>
    </recommendedName>
    <alternativeName>
        <fullName evidence="2">30S ribosomal protein S10, chloroplastic</fullName>
    </alternativeName>
</protein>
<keyword id="KW-0150">Chloroplast</keyword>
<keyword id="KW-0934">Plastid</keyword>
<keyword id="KW-1185">Reference proteome</keyword>
<keyword id="KW-0687">Ribonucleoprotein</keyword>
<keyword id="KW-0689">Ribosomal protein</keyword>